<accession>A5N3R3</accession>
<gene>
    <name evidence="1" type="primary">ispF</name>
    <name type="ordered locus">CKL_3774</name>
</gene>
<sequence length="164" mass="17766">MRVGLGYDVHKLGYNTPLILGGVNIPFNKGLIGHSDADVLVHAIMDALLGALSLGDIGKHFPPSDMKYKNISSLKLLNYVSNLIKSKGYSIGNIDSTIIAEEPKLFPYIPDMRLNIAKILKVNTSIISVKATTEEGLGFTGKKEGIAAQSICLLYNNLKHSIDL</sequence>
<name>ISPF_CLOK5</name>
<keyword id="KW-0414">Isoprene biosynthesis</keyword>
<keyword id="KW-0456">Lyase</keyword>
<keyword id="KW-0479">Metal-binding</keyword>
<keyword id="KW-1185">Reference proteome</keyword>
<dbReference type="EC" id="4.6.1.12" evidence="1"/>
<dbReference type="EMBL" id="CP000673">
    <property type="protein sequence ID" value="EDK35759.1"/>
    <property type="molecule type" value="Genomic_DNA"/>
</dbReference>
<dbReference type="RefSeq" id="WP_012104093.1">
    <property type="nucleotide sequence ID" value="NC_009706.1"/>
</dbReference>
<dbReference type="SMR" id="A5N3R3"/>
<dbReference type="STRING" id="431943.CKL_3774"/>
<dbReference type="KEGG" id="ckl:CKL_3774"/>
<dbReference type="eggNOG" id="COG0245">
    <property type="taxonomic scope" value="Bacteria"/>
</dbReference>
<dbReference type="HOGENOM" id="CLU_084630_2_0_9"/>
<dbReference type="UniPathway" id="UPA00056">
    <property type="reaction ID" value="UER00095"/>
</dbReference>
<dbReference type="Proteomes" id="UP000002411">
    <property type="component" value="Chromosome"/>
</dbReference>
<dbReference type="GO" id="GO:0008685">
    <property type="term" value="F:2-C-methyl-D-erythritol 2,4-cyclodiphosphate synthase activity"/>
    <property type="evidence" value="ECO:0007669"/>
    <property type="project" value="UniProtKB-UniRule"/>
</dbReference>
<dbReference type="GO" id="GO:0046872">
    <property type="term" value="F:metal ion binding"/>
    <property type="evidence" value="ECO:0007669"/>
    <property type="project" value="UniProtKB-KW"/>
</dbReference>
<dbReference type="GO" id="GO:0019288">
    <property type="term" value="P:isopentenyl diphosphate biosynthetic process, methylerythritol 4-phosphate pathway"/>
    <property type="evidence" value="ECO:0007669"/>
    <property type="project" value="UniProtKB-UniRule"/>
</dbReference>
<dbReference type="GO" id="GO:0016114">
    <property type="term" value="P:terpenoid biosynthetic process"/>
    <property type="evidence" value="ECO:0007669"/>
    <property type="project" value="InterPro"/>
</dbReference>
<dbReference type="CDD" id="cd00554">
    <property type="entry name" value="MECDP_synthase"/>
    <property type="match status" value="1"/>
</dbReference>
<dbReference type="FunFam" id="3.30.1330.50:FF:000001">
    <property type="entry name" value="2-C-methyl-D-erythritol 2,4-cyclodiphosphate synthase"/>
    <property type="match status" value="1"/>
</dbReference>
<dbReference type="Gene3D" id="3.30.1330.50">
    <property type="entry name" value="2-C-methyl-D-erythritol 2,4-cyclodiphosphate synthase"/>
    <property type="match status" value="1"/>
</dbReference>
<dbReference type="HAMAP" id="MF_00107">
    <property type="entry name" value="IspF"/>
    <property type="match status" value="1"/>
</dbReference>
<dbReference type="InterPro" id="IPR003526">
    <property type="entry name" value="MECDP_synthase"/>
</dbReference>
<dbReference type="InterPro" id="IPR020555">
    <property type="entry name" value="MECDP_synthase_CS"/>
</dbReference>
<dbReference type="InterPro" id="IPR036571">
    <property type="entry name" value="MECDP_synthase_sf"/>
</dbReference>
<dbReference type="NCBIfam" id="TIGR00151">
    <property type="entry name" value="ispF"/>
    <property type="match status" value="1"/>
</dbReference>
<dbReference type="PANTHER" id="PTHR43181">
    <property type="entry name" value="2-C-METHYL-D-ERYTHRITOL 2,4-CYCLODIPHOSPHATE SYNTHASE, CHLOROPLASTIC"/>
    <property type="match status" value="1"/>
</dbReference>
<dbReference type="PANTHER" id="PTHR43181:SF1">
    <property type="entry name" value="2-C-METHYL-D-ERYTHRITOL 2,4-CYCLODIPHOSPHATE SYNTHASE, CHLOROPLASTIC"/>
    <property type="match status" value="1"/>
</dbReference>
<dbReference type="Pfam" id="PF02542">
    <property type="entry name" value="YgbB"/>
    <property type="match status" value="1"/>
</dbReference>
<dbReference type="SUPFAM" id="SSF69765">
    <property type="entry name" value="IpsF-like"/>
    <property type="match status" value="1"/>
</dbReference>
<dbReference type="PROSITE" id="PS01350">
    <property type="entry name" value="ISPF"/>
    <property type="match status" value="1"/>
</dbReference>
<reference key="1">
    <citation type="journal article" date="2008" name="Proc. Natl. Acad. Sci. U.S.A.">
        <title>The genome of Clostridium kluyveri, a strict anaerobe with unique metabolic features.</title>
        <authorList>
            <person name="Seedorf H."/>
            <person name="Fricke W.F."/>
            <person name="Veith B."/>
            <person name="Brueggemann H."/>
            <person name="Liesegang H."/>
            <person name="Strittmatter A."/>
            <person name="Miethke M."/>
            <person name="Buckel W."/>
            <person name="Hinderberger J."/>
            <person name="Li F."/>
            <person name="Hagemeier C."/>
            <person name="Thauer R.K."/>
            <person name="Gottschalk G."/>
        </authorList>
    </citation>
    <scope>NUCLEOTIDE SEQUENCE [LARGE SCALE GENOMIC DNA]</scope>
    <source>
        <strain>ATCC 8527 / DSM 555 / NBRC 12016 / NCIMB 10680 / K1</strain>
    </source>
</reference>
<organism>
    <name type="scientific">Clostridium kluyveri (strain ATCC 8527 / DSM 555 / NBRC 12016 / NCIMB 10680 / K1)</name>
    <dbReference type="NCBI Taxonomy" id="431943"/>
    <lineage>
        <taxon>Bacteria</taxon>
        <taxon>Bacillati</taxon>
        <taxon>Bacillota</taxon>
        <taxon>Clostridia</taxon>
        <taxon>Eubacteriales</taxon>
        <taxon>Clostridiaceae</taxon>
        <taxon>Clostridium</taxon>
    </lineage>
</organism>
<protein>
    <recommendedName>
        <fullName evidence="1">2-C-methyl-D-erythritol 2,4-cyclodiphosphate synthase</fullName>
        <shortName evidence="1">MECDP-synthase</shortName>
        <shortName evidence="1">MECPP-synthase</shortName>
        <shortName evidence="1">MECPS</shortName>
        <ecNumber evidence="1">4.6.1.12</ecNumber>
    </recommendedName>
</protein>
<evidence type="ECO:0000255" key="1">
    <source>
        <dbReference type="HAMAP-Rule" id="MF_00107"/>
    </source>
</evidence>
<feature type="chain" id="PRO_1000075909" description="2-C-methyl-D-erythritol 2,4-cyclodiphosphate synthase">
    <location>
        <begin position="1"/>
        <end position="164"/>
    </location>
</feature>
<feature type="binding site" evidence="1">
    <location>
        <begin position="8"/>
        <end position="10"/>
    </location>
    <ligand>
        <name>4-CDP-2-C-methyl-D-erythritol 2-phosphate</name>
        <dbReference type="ChEBI" id="CHEBI:57919"/>
    </ligand>
</feature>
<feature type="binding site" evidence="1">
    <location>
        <position position="8"/>
    </location>
    <ligand>
        <name>a divalent metal cation</name>
        <dbReference type="ChEBI" id="CHEBI:60240"/>
    </ligand>
</feature>
<feature type="binding site" evidence="1">
    <location>
        <position position="10"/>
    </location>
    <ligand>
        <name>a divalent metal cation</name>
        <dbReference type="ChEBI" id="CHEBI:60240"/>
    </ligand>
</feature>
<feature type="binding site" evidence="1">
    <location>
        <begin position="34"/>
        <end position="35"/>
    </location>
    <ligand>
        <name>4-CDP-2-C-methyl-D-erythritol 2-phosphate</name>
        <dbReference type="ChEBI" id="CHEBI:57919"/>
    </ligand>
</feature>
<feature type="binding site" evidence="1">
    <location>
        <position position="42"/>
    </location>
    <ligand>
        <name>a divalent metal cation</name>
        <dbReference type="ChEBI" id="CHEBI:60240"/>
    </ligand>
</feature>
<feature type="binding site" evidence="1">
    <location>
        <begin position="56"/>
        <end position="58"/>
    </location>
    <ligand>
        <name>4-CDP-2-C-methyl-D-erythritol 2-phosphate</name>
        <dbReference type="ChEBI" id="CHEBI:57919"/>
    </ligand>
</feature>
<feature type="binding site" evidence="1">
    <location>
        <begin position="132"/>
        <end position="135"/>
    </location>
    <ligand>
        <name>4-CDP-2-C-methyl-D-erythritol 2-phosphate</name>
        <dbReference type="ChEBI" id="CHEBI:57919"/>
    </ligand>
</feature>
<feature type="binding site" evidence="1">
    <location>
        <position position="139"/>
    </location>
    <ligand>
        <name>4-CDP-2-C-methyl-D-erythritol 2-phosphate</name>
        <dbReference type="ChEBI" id="CHEBI:57919"/>
    </ligand>
</feature>
<feature type="binding site" evidence="1">
    <location>
        <position position="142"/>
    </location>
    <ligand>
        <name>4-CDP-2-C-methyl-D-erythritol 2-phosphate</name>
        <dbReference type="ChEBI" id="CHEBI:57919"/>
    </ligand>
</feature>
<feature type="site" description="Transition state stabilizer" evidence="1">
    <location>
        <position position="34"/>
    </location>
</feature>
<feature type="site" description="Transition state stabilizer" evidence="1">
    <location>
        <position position="133"/>
    </location>
</feature>
<comment type="function">
    <text evidence="1">Involved in the biosynthesis of isopentenyl diphosphate (IPP) and dimethylallyl diphosphate (DMAPP), two major building blocks of isoprenoid compounds. Catalyzes the conversion of 4-diphosphocytidyl-2-C-methyl-D-erythritol 2-phosphate (CDP-ME2P) to 2-C-methyl-D-erythritol 2,4-cyclodiphosphate (ME-CPP) with a corresponding release of cytidine 5-monophosphate (CMP).</text>
</comment>
<comment type="catalytic activity">
    <reaction evidence="1">
        <text>4-CDP-2-C-methyl-D-erythritol 2-phosphate = 2-C-methyl-D-erythritol 2,4-cyclic diphosphate + CMP</text>
        <dbReference type="Rhea" id="RHEA:23864"/>
        <dbReference type="ChEBI" id="CHEBI:57919"/>
        <dbReference type="ChEBI" id="CHEBI:58483"/>
        <dbReference type="ChEBI" id="CHEBI:60377"/>
        <dbReference type="EC" id="4.6.1.12"/>
    </reaction>
</comment>
<comment type="cofactor">
    <cofactor evidence="1">
        <name>a divalent metal cation</name>
        <dbReference type="ChEBI" id="CHEBI:60240"/>
    </cofactor>
    <text evidence="1">Binds 1 divalent metal cation per subunit.</text>
</comment>
<comment type="pathway">
    <text evidence="1">Isoprenoid biosynthesis; isopentenyl diphosphate biosynthesis via DXP pathway; isopentenyl diphosphate from 1-deoxy-D-xylulose 5-phosphate: step 4/6.</text>
</comment>
<comment type="subunit">
    <text evidence="1">Homotrimer.</text>
</comment>
<comment type="similarity">
    <text evidence="1">Belongs to the IspF family.</text>
</comment>
<proteinExistence type="inferred from homology"/>